<evidence type="ECO:0000255" key="1">
    <source>
        <dbReference type="HAMAP-Rule" id="MF_00435"/>
    </source>
</evidence>
<evidence type="ECO:0000255" key="2">
    <source>
        <dbReference type="PROSITE-ProRule" id="PRU01197"/>
    </source>
</evidence>
<evidence type="ECO:0000255" key="3">
    <source>
        <dbReference type="PROSITE-ProRule" id="PRU01198"/>
    </source>
</evidence>
<accession>Q1CBS1</accession>
<feature type="chain" id="PRO_1000050592" description="Ketol-acid reductoisomerase (NADP(+))">
    <location>
        <begin position="1"/>
        <end position="492"/>
    </location>
</feature>
<feature type="domain" description="KARI N-terminal Rossmann" evidence="2">
    <location>
        <begin position="15"/>
        <end position="208"/>
    </location>
</feature>
<feature type="domain" description="KARI C-terminal knotted 1" evidence="3">
    <location>
        <begin position="209"/>
        <end position="344"/>
    </location>
</feature>
<feature type="domain" description="KARI C-terminal knotted 2" evidence="3">
    <location>
        <begin position="345"/>
        <end position="485"/>
    </location>
</feature>
<feature type="active site" evidence="1">
    <location>
        <position position="132"/>
    </location>
</feature>
<feature type="binding site" evidence="1">
    <location>
        <begin position="45"/>
        <end position="48"/>
    </location>
    <ligand>
        <name>NADP(+)</name>
        <dbReference type="ChEBI" id="CHEBI:58349"/>
    </ligand>
</feature>
<feature type="binding site" evidence="1">
    <location>
        <position position="68"/>
    </location>
    <ligand>
        <name>NADP(+)</name>
        <dbReference type="ChEBI" id="CHEBI:58349"/>
    </ligand>
</feature>
<feature type="binding site" evidence="1">
    <location>
        <position position="76"/>
    </location>
    <ligand>
        <name>NADP(+)</name>
        <dbReference type="ChEBI" id="CHEBI:58349"/>
    </ligand>
</feature>
<feature type="binding site" evidence="1">
    <location>
        <position position="78"/>
    </location>
    <ligand>
        <name>NADP(+)</name>
        <dbReference type="ChEBI" id="CHEBI:58349"/>
    </ligand>
</feature>
<feature type="binding site" evidence="1">
    <location>
        <begin position="108"/>
        <end position="110"/>
    </location>
    <ligand>
        <name>NADP(+)</name>
        <dbReference type="ChEBI" id="CHEBI:58349"/>
    </ligand>
</feature>
<feature type="binding site" evidence="1">
    <location>
        <position position="158"/>
    </location>
    <ligand>
        <name>NADP(+)</name>
        <dbReference type="ChEBI" id="CHEBI:58349"/>
    </ligand>
</feature>
<feature type="binding site" evidence="1">
    <location>
        <position position="217"/>
    </location>
    <ligand>
        <name>Mg(2+)</name>
        <dbReference type="ChEBI" id="CHEBI:18420"/>
        <label>1</label>
    </ligand>
</feature>
<feature type="binding site" evidence="1">
    <location>
        <position position="217"/>
    </location>
    <ligand>
        <name>Mg(2+)</name>
        <dbReference type="ChEBI" id="CHEBI:18420"/>
        <label>2</label>
    </ligand>
</feature>
<feature type="binding site" evidence="1">
    <location>
        <position position="221"/>
    </location>
    <ligand>
        <name>Mg(2+)</name>
        <dbReference type="ChEBI" id="CHEBI:18420"/>
        <label>1</label>
    </ligand>
</feature>
<feature type="binding site" evidence="1">
    <location>
        <position position="389"/>
    </location>
    <ligand>
        <name>Mg(2+)</name>
        <dbReference type="ChEBI" id="CHEBI:18420"/>
        <label>2</label>
    </ligand>
</feature>
<feature type="binding site" evidence="1">
    <location>
        <position position="393"/>
    </location>
    <ligand>
        <name>Mg(2+)</name>
        <dbReference type="ChEBI" id="CHEBI:18420"/>
        <label>2</label>
    </ligand>
</feature>
<feature type="binding site" evidence="1">
    <location>
        <position position="414"/>
    </location>
    <ligand>
        <name>substrate</name>
    </ligand>
</feature>
<protein>
    <recommendedName>
        <fullName evidence="1">Ketol-acid reductoisomerase (NADP(+))</fullName>
        <shortName evidence="1">KARI</shortName>
        <ecNumber evidence="1">1.1.1.86</ecNumber>
    </recommendedName>
    <alternativeName>
        <fullName evidence="1">Acetohydroxy-acid isomeroreductase</fullName>
        <shortName evidence="1">AHIR</shortName>
    </alternativeName>
    <alternativeName>
        <fullName evidence="1">Alpha-keto-beta-hydroxylacyl reductoisomerase</fullName>
    </alternativeName>
    <alternativeName>
        <fullName evidence="1">Ketol-acid reductoisomerase type 2</fullName>
    </alternativeName>
    <alternativeName>
        <fullName evidence="1">Ketol-acid reductoisomerase type II</fullName>
    </alternativeName>
</protein>
<keyword id="KW-0028">Amino-acid biosynthesis</keyword>
<keyword id="KW-0100">Branched-chain amino acid biosynthesis</keyword>
<keyword id="KW-0460">Magnesium</keyword>
<keyword id="KW-0479">Metal-binding</keyword>
<keyword id="KW-0521">NADP</keyword>
<keyword id="KW-0560">Oxidoreductase</keyword>
<keyword id="KW-0677">Repeat</keyword>
<gene>
    <name evidence="1" type="primary">ilvC</name>
    <name type="ordered locus">YPA_0132</name>
</gene>
<name>ILVC_YERPA</name>
<reference key="1">
    <citation type="journal article" date="2006" name="J. Bacteriol.">
        <title>Complete genome sequence of Yersinia pestis strains Antiqua and Nepal516: evidence of gene reduction in an emerging pathogen.</title>
        <authorList>
            <person name="Chain P.S.G."/>
            <person name="Hu P."/>
            <person name="Malfatti S.A."/>
            <person name="Radnedge L."/>
            <person name="Larimer F."/>
            <person name="Vergez L.M."/>
            <person name="Worsham P."/>
            <person name="Chu M.C."/>
            <person name="Andersen G.L."/>
        </authorList>
    </citation>
    <scope>NUCLEOTIDE SEQUENCE [LARGE SCALE GENOMIC DNA]</scope>
    <source>
        <strain>Antiqua</strain>
    </source>
</reference>
<dbReference type="EC" id="1.1.1.86" evidence="1"/>
<dbReference type="EMBL" id="CP000308">
    <property type="protein sequence ID" value="ABG12101.1"/>
    <property type="molecule type" value="Genomic_DNA"/>
</dbReference>
<dbReference type="RefSeq" id="WP_002212007.1">
    <property type="nucleotide sequence ID" value="NZ_CP009906.1"/>
</dbReference>
<dbReference type="SMR" id="Q1CBS1"/>
<dbReference type="GeneID" id="57974817"/>
<dbReference type="KEGG" id="ypa:YPA_0132"/>
<dbReference type="UniPathway" id="UPA00047">
    <property type="reaction ID" value="UER00056"/>
</dbReference>
<dbReference type="UniPathway" id="UPA00049">
    <property type="reaction ID" value="UER00060"/>
</dbReference>
<dbReference type="Proteomes" id="UP000001971">
    <property type="component" value="Chromosome"/>
</dbReference>
<dbReference type="GO" id="GO:0005829">
    <property type="term" value="C:cytosol"/>
    <property type="evidence" value="ECO:0007669"/>
    <property type="project" value="TreeGrafter"/>
</dbReference>
<dbReference type="GO" id="GO:0004455">
    <property type="term" value="F:ketol-acid reductoisomerase activity"/>
    <property type="evidence" value="ECO:0007669"/>
    <property type="project" value="UniProtKB-UniRule"/>
</dbReference>
<dbReference type="GO" id="GO:0000287">
    <property type="term" value="F:magnesium ion binding"/>
    <property type="evidence" value="ECO:0007669"/>
    <property type="project" value="UniProtKB-UniRule"/>
</dbReference>
<dbReference type="GO" id="GO:0009097">
    <property type="term" value="P:isoleucine biosynthetic process"/>
    <property type="evidence" value="ECO:0007669"/>
    <property type="project" value="UniProtKB-UniRule"/>
</dbReference>
<dbReference type="GO" id="GO:0009099">
    <property type="term" value="P:L-valine biosynthetic process"/>
    <property type="evidence" value="ECO:0007669"/>
    <property type="project" value="UniProtKB-UniRule"/>
</dbReference>
<dbReference type="FunFam" id="1.10.1040.10:FF:000007">
    <property type="entry name" value="Ketol-acid reductoisomerase (NADP(+))"/>
    <property type="match status" value="1"/>
</dbReference>
<dbReference type="FunFam" id="3.40.50.720:FF:000043">
    <property type="entry name" value="Ketol-acid reductoisomerase (NADP(+))"/>
    <property type="match status" value="1"/>
</dbReference>
<dbReference type="Gene3D" id="1.10.1040.10">
    <property type="entry name" value="N-(1-d-carboxylethyl)-l-norvaline Dehydrogenase, domain 2"/>
    <property type="match status" value="1"/>
</dbReference>
<dbReference type="Gene3D" id="3.40.50.720">
    <property type="entry name" value="NAD(P)-binding Rossmann-like Domain"/>
    <property type="match status" value="1"/>
</dbReference>
<dbReference type="HAMAP" id="MF_00435">
    <property type="entry name" value="IlvC"/>
    <property type="match status" value="1"/>
</dbReference>
<dbReference type="InterPro" id="IPR008927">
    <property type="entry name" value="6-PGluconate_DH-like_C_sf"/>
</dbReference>
<dbReference type="InterPro" id="IPR013328">
    <property type="entry name" value="6PGD_dom2"/>
</dbReference>
<dbReference type="InterPro" id="IPR013023">
    <property type="entry name" value="KARI"/>
</dbReference>
<dbReference type="InterPro" id="IPR000506">
    <property type="entry name" value="KARI_C"/>
</dbReference>
<dbReference type="InterPro" id="IPR013116">
    <property type="entry name" value="KARI_N"/>
</dbReference>
<dbReference type="InterPro" id="IPR036291">
    <property type="entry name" value="NAD(P)-bd_dom_sf"/>
</dbReference>
<dbReference type="NCBIfam" id="TIGR00465">
    <property type="entry name" value="ilvC"/>
    <property type="match status" value="1"/>
</dbReference>
<dbReference type="NCBIfam" id="NF003557">
    <property type="entry name" value="PRK05225.1"/>
    <property type="match status" value="1"/>
</dbReference>
<dbReference type="PANTHER" id="PTHR21371">
    <property type="entry name" value="KETOL-ACID REDUCTOISOMERASE, MITOCHONDRIAL"/>
    <property type="match status" value="1"/>
</dbReference>
<dbReference type="PANTHER" id="PTHR21371:SF1">
    <property type="entry name" value="KETOL-ACID REDUCTOISOMERASE, MITOCHONDRIAL"/>
    <property type="match status" value="1"/>
</dbReference>
<dbReference type="Pfam" id="PF01450">
    <property type="entry name" value="KARI_C"/>
    <property type="match status" value="2"/>
</dbReference>
<dbReference type="Pfam" id="PF07991">
    <property type="entry name" value="KARI_N"/>
    <property type="match status" value="1"/>
</dbReference>
<dbReference type="SUPFAM" id="SSF48179">
    <property type="entry name" value="6-phosphogluconate dehydrogenase C-terminal domain-like"/>
    <property type="match status" value="2"/>
</dbReference>
<dbReference type="SUPFAM" id="SSF51735">
    <property type="entry name" value="NAD(P)-binding Rossmann-fold domains"/>
    <property type="match status" value="1"/>
</dbReference>
<dbReference type="PROSITE" id="PS51851">
    <property type="entry name" value="KARI_C"/>
    <property type="match status" value="2"/>
</dbReference>
<dbReference type="PROSITE" id="PS51850">
    <property type="entry name" value="KARI_N"/>
    <property type="match status" value="1"/>
</dbReference>
<organism>
    <name type="scientific">Yersinia pestis bv. Antiqua (strain Antiqua)</name>
    <dbReference type="NCBI Taxonomy" id="360102"/>
    <lineage>
        <taxon>Bacteria</taxon>
        <taxon>Pseudomonadati</taxon>
        <taxon>Pseudomonadota</taxon>
        <taxon>Gammaproteobacteria</taxon>
        <taxon>Enterobacterales</taxon>
        <taxon>Yersiniaceae</taxon>
        <taxon>Yersinia</taxon>
    </lineage>
</organism>
<proteinExistence type="inferred from homology"/>
<comment type="function">
    <text evidence="1">Involved in the biosynthesis of branched-chain amino acids (BCAA). Catalyzes an alkyl-migration followed by a ketol-acid reduction of (S)-2-acetolactate (S2AL) to yield (R)-2,3-dihydroxy-isovalerate. In the isomerase reaction, S2AL is rearranged via a Mg-dependent methyl migration to produce 3-hydroxy-3-methyl-2-ketobutyrate (HMKB). In the reductase reaction, this 2-ketoacid undergoes a metal-dependent reduction by NADPH to yield (R)-2,3-dihydroxy-isovalerate.</text>
</comment>
<comment type="catalytic activity">
    <reaction evidence="1">
        <text>(2R)-2,3-dihydroxy-3-methylbutanoate + NADP(+) = (2S)-2-acetolactate + NADPH + H(+)</text>
        <dbReference type="Rhea" id="RHEA:22068"/>
        <dbReference type="ChEBI" id="CHEBI:15378"/>
        <dbReference type="ChEBI" id="CHEBI:49072"/>
        <dbReference type="ChEBI" id="CHEBI:57783"/>
        <dbReference type="ChEBI" id="CHEBI:58349"/>
        <dbReference type="ChEBI" id="CHEBI:58476"/>
        <dbReference type="EC" id="1.1.1.86"/>
    </reaction>
</comment>
<comment type="catalytic activity">
    <reaction evidence="1">
        <text>(2R,3R)-2,3-dihydroxy-3-methylpentanoate + NADP(+) = (S)-2-ethyl-2-hydroxy-3-oxobutanoate + NADPH + H(+)</text>
        <dbReference type="Rhea" id="RHEA:13493"/>
        <dbReference type="ChEBI" id="CHEBI:15378"/>
        <dbReference type="ChEBI" id="CHEBI:49256"/>
        <dbReference type="ChEBI" id="CHEBI:49258"/>
        <dbReference type="ChEBI" id="CHEBI:57783"/>
        <dbReference type="ChEBI" id="CHEBI:58349"/>
        <dbReference type="EC" id="1.1.1.86"/>
    </reaction>
</comment>
<comment type="cofactor">
    <cofactor evidence="1">
        <name>Mg(2+)</name>
        <dbReference type="ChEBI" id="CHEBI:18420"/>
    </cofactor>
    <text evidence="1">Binds 2 magnesium ions per subunit.</text>
</comment>
<comment type="pathway">
    <text evidence="1">Amino-acid biosynthesis; L-isoleucine biosynthesis; L-isoleucine from 2-oxobutanoate: step 2/4.</text>
</comment>
<comment type="pathway">
    <text evidence="1">Amino-acid biosynthesis; L-valine biosynthesis; L-valine from pyruvate: step 2/4.</text>
</comment>
<comment type="similarity">
    <text evidence="1">Belongs to the ketol-acid reductoisomerase family.</text>
</comment>
<sequence>MANYFNTLNLRQQLAQLGKCRFMARDEFADEAGYLKGKKVVIVGCGAQGLNQGLNMRDSGLDVAYALRKEAIAEKRASWRKATENGFKVGTYEELIPQADLVVNLTPDKQHSAVVKAVQPLMKEGAALGYSHGFNIVEVGEQVRKDITVVMVAPKCPGTEVREEYKRGFGVPTLIAVHPENDPKGEGMAIAKAWAAATGGHRAGVLEFSFVAEVKSDLMGEQTILCGMLQAGSLLCFDKLVSEGTDAAYAEKLIQFGWETITEALKQGGITLMMDRLSNPAKLRAYALSEQLKEIMAPLFQKHMDDIISGAFSSGMMADWANDDVKLLNWREETGRTAFENAPQFEGKISEQEYFDHGVLMIAMVKAGVELAFETMVDSGIIEESAYYESLHELPLIANTIARKRLYEMNVVISDTAEYGNYLFANAAVPLLKEKFMDSLQAGDLGKSIPGSAVDNAQLRDVNEAIRNHPIEAVGHKLRGYMTDMKRIAVAG</sequence>